<accession>Q9H583</accession>
<accession>Q5T3Q8</accession>
<accession>Q6P197</accession>
<accession>Q9NW23</accession>
<organism evidence="12">
    <name type="scientific">Homo sapiens</name>
    <name type="common">Human</name>
    <dbReference type="NCBI Taxonomy" id="9606"/>
    <lineage>
        <taxon>Eukaryota</taxon>
        <taxon>Metazoa</taxon>
        <taxon>Chordata</taxon>
        <taxon>Craniata</taxon>
        <taxon>Vertebrata</taxon>
        <taxon>Euteleostomi</taxon>
        <taxon>Mammalia</taxon>
        <taxon>Eutheria</taxon>
        <taxon>Euarchontoglires</taxon>
        <taxon>Primates</taxon>
        <taxon>Haplorrhini</taxon>
        <taxon>Catarrhini</taxon>
        <taxon>Hominidae</taxon>
        <taxon>Homo</taxon>
    </lineage>
</organism>
<proteinExistence type="evidence at protein level"/>
<protein>
    <recommendedName>
        <fullName>HEAT repeat-containing protein 1</fullName>
    </recommendedName>
    <alternativeName>
        <fullName>Protein BAP28</fullName>
    </alternativeName>
    <alternativeName>
        <fullName>U3 small nucleolar RNA-associated protein 10 homolog</fullName>
    </alternativeName>
    <component>
        <recommendedName>
            <fullName>HEAT repeat-containing protein 1, N-terminally processed</fullName>
        </recommendedName>
    </component>
</protein>
<dbReference type="EMBL" id="AX067150">
    <property type="protein sequence ID" value="CAC26776.1"/>
    <property type="molecule type" value="mRNA"/>
</dbReference>
<dbReference type="EMBL" id="AL359921">
    <property type="status" value="NOT_ANNOTATED_CDS"/>
    <property type="molecule type" value="Genomic_DNA"/>
</dbReference>
<dbReference type="EMBL" id="BC065205">
    <property type="protein sequence ID" value="AAH65205.1"/>
    <property type="molecule type" value="mRNA"/>
</dbReference>
<dbReference type="EMBL" id="AK001221">
    <property type="protein sequence ID" value="BAA91564.1"/>
    <property type="status" value="ALT_INIT"/>
    <property type="molecule type" value="mRNA"/>
</dbReference>
<dbReference type="CCDS" id="CCDS31066.1"/>
<dbReference type="RefSeq" id="NP_060542.4">
    <property type="nucleotide sequence ID" value="NM_018072.5"/>
</dbReference>
<dbReference type="PDB" id="7MQ8">
    <property type="method" value="EM"/>
    <property type="resolution" value="3.60 A"/>
    <property type="chains" value="LM=1-2144"/>
</dbReference>
<dbReference type="PDB" id="7MQ9">
    <property type="method" value="EM"/>
    <property type="resolution" value="3.87 A"/>
    <property type="chains" value="LM=1-2144"/>
</dbReference>
<dbReference type="PDB" id="7MQA">
    <property type="method" value="EM"/>
    <property type="resolution" value="2.70 A"/>
    <property type="chains" value="LM=1-2144"/>
</dbReference>
<dbReference type="PDBsum" id="7MQ8"/>
<dbReference type="PDBsum" id="7MQ9"/>
<dbReference type="PDBsum" id="7MQA"/>
<dbReference type="EMDB" id="EMD-23936"/>
<dbReference type="EMDB" id="EMD-23937"/>
<dbReference type="EMDB" id="EMD-23938"/>
<dbReference type="SMR" id="Q9H583"/>
<dbReference type="BioGRID" id="120433">
    <property type="interactions" value="273"/>
</dbReference>
<dbReference type="ComplexPortal" id="CPX-2450">
    <property type="entry name" value="UTP-A complex"/>
</dbReference>
<dbReference type="FunCoup" id="Q9H583">
    <property type="interactions" value="3615"/>
</dbReference>
<dbReference type="IntAct" id="Q9H583">
    <property type="interactions" value="112"/>
</dbReference>
<dbReference type="MINT" id="Q9H583"/>
<dbReference type="STRING" id="9606.ENSP00000355541"/>
<dbReference type="GlyGen" id="Q9H583">
    <property type="glycosylation" value="2 sites, 1 N-linked glycan (1 site), 1 O-linked glycan (1 site)"/>
</dbReference>
<dbReference type="iPTMnet" id="Q9H583"/>
<dbReference type="MetOSite" id="Q9H583"/>
<dbReference type="PhosphoSitePlus" id="Q9H583"/>
<dbReference type="SwissPalm" id="Q9H583"/>
<dbReference type="BioMuta" id="HEATR1"/>
<dbReference type="DMDM" id="71153494"/>
<dbReference type="jPOST" id="Q9H583"/>
<dbReference type="MassIVE" id="Q9H583"/>
<dbReference type="PaxDb" id="9606-ENSP00000355541"/>
<dbReference type="PeptideAtlas" id="Q9H583"/>
<dbReference type="ProteomicsDB" id="80900"/>
<dbReference type="Pumba" id="Q9H583"/>
<dbReference type="Antibodypedia" id="34700">
    <property type="antibodies" value="87 antibodies from 19 providers"/>
</dbReference>
<dbReference type="DNASU" id="55127"/>
<dbReference type="Ensembl" id="ENST00000366582.8">
    <property type="protein sequence ID" value="ENSP00000355541.3"/>
    <property type="gene ID" value="ENSG00000119285.11"/>
</dbReference>
<dbReference type="GeneID" id="55127"/>
<dbReference type="KEGG" id="hsa:55127"/>
<dbReference type="MANE-Select" id="ENST00000366582.8">
    <property type="protein sequence ID" value="ENSP00000355541.3"/>
    <property type="RefSeq nucleotide sequence ID" value="NM_018072.6"/>
    <property type="RefSeq protein sequence ID" value="NP_060542.4"/>
</dbReference>
<dbReference type="UCSC" id="uc001hyd.3">
    <property type="organism name" value="human"/>
</dbReference>
<dbReference type="AGR" id="HGNC:25517"/>
<dbReference type="CTD" id="55127"/>
<dbReference type="DisGeNET" id="55127"/>
<dbReference type="GeneCards" id="HEATR1"/>
<dbReference type="HGNC" id="HGNC:25517">
    <property type="gene designation" value="HEATR1"/>
</dbReference>
<dbReference type="HPA" id="ENSG00000119285">
    <property type="expression patterns" value="Low tissue specificity"/>
</dbReference>
<dbReference type="MIM" id="620390">
    <property type="type" value="gene"/>
</dbReference>
<dbReference type="neXtProt" id="NX_Q9H583"/>
<dbReference type="OpenTargets" id="ENSG00000119285"/>
<dbReference type="PharmGKB" id="PA142671697"/>
<dbReference type="VEuPathDB" id="HostDB:ENSG00000119285"/>
<dbReference type="eggNOG" id="KOG1837">
    <property type="taxonomic scope" value="Eukaryota"/>
</dbReference>
<dbReference type="GeneTree" id="ENSGT00390000015845"/>
<dbReference type="InParanoid" id="Q9H583"/>
<dbReference type="OMA" id="NDVMWKQ"/>
<dbReference type="OrthoDB" id="31183at2759"/>
<dbReference type="PAN-GO" id="Q9H583">
    <property type="GO annotations" value="6 GO annotations based on evolutionary models"/>
</dbReference>
<dbReference type="PhylomeDB" id="Q9H583"/>
<dbReference type="TreeFam" id="TF314593"/>
<dbReference type="PathwayCommons" id="Q9H583"/>
<dbReference type="Reactome" id="R-HSA-6790901">
    <property type="pathway name" value="rRNA modification in the nucleus and cytosol"/>
</dbReference>
<dbReference type="Reactome" id="R-HSA-6791226">
    <property type="pathway name" value="Major pathway of rRNA processing in the nucleolus and cytosol"/>
</dbReference>
<dbReference type="SignaLink" id="Q9H583"/>
<dbReference type="BioGRID-ORCS" id="55127">
    <property type="hits" value="834 hits in 1169 CRISPR screens"/>
</dbReference>
<dbReference type="CD-CODE" id="91857CE7">
    <property type="entry name" value="Nucleolus"/>
</dbReference>
<dbReference type="ChiTaRS" id="HEATR1">
    <property type="organism name" value="human"/>
</dbReference>
<dbReference type="GeneWiki" id="HEATR1"/>
<dbReference type="GenomeRNAi" id="55127"/>
<dbReference type="Pharos" id="Q9H583">
    <property type="development level" value="Tbio"/>
</dbReference>
<dbReference type="PRO" id="PR:Q9H583"/>
<dbReference type="Proteomes" id="UP000005640">
    <property type="component" value="Chromosome 1"/>
</dbReference>
<dbReference type="RNAct" id="Q9H583">
    <property type="molecule type" value="protein"/>
</dbReference>
<dbReference type="Bgee" id="ENSG00000119285">
    <property type="expression patterns" value="Expressed in pancreatic ductal cell and 199 other cell types or tissues"/>
</dbReference>
<dbReference type="ExpressionAtlas" id="Q9H583">
    <property type="expression patterns" value="baseline and differential"/>
</dbReference>
<dbReference type="GO" id="GO:0030686">
    <property type="term" value="C:90S preribosome"/>
    <property type="evidence" value="ECO:0000318"/>
    <property type="project" value="GO_Central"/>
</dbReference>
<dbReference type="GO" id="GO:0001650">
    <property type="term" value="C:fibrillar center"/>
    <property type="evidence" value="ECO:0000314"/>
    <property type="project" value="HPA"/>
</dbReference>
<dbReference type="GO" id="GO:0016020">
    <property type="term" value="C:membrane"/>
    <property type="evidence" value="ECO:0007005"/>
    <property type="project" value="UniProtKB"/>
</dbReference>
<dbReference type="GO" id="GO:0005739">
    <property type="term" value="C:mitochondrion"/>
    <property type="evidence" value="ECO:0000314"/>
    <property type="project" value="HPA"/>
</dbReference>
<dbReference type="GO" id="GO:0005730">
    <property type="term" value="C:nucleolus"/>
    <property type="evidence" value="ECO:0000314"/>
    <property type="project" value="UniProtKB"/>
</dbReference>
<dbReference type="GO" id="GO:0005654">
    <property type="term" value="C:nucleoplasm"/>
    <property type="evidence" value="ECO:0000304"/>
    <property type="project" value="Reactome"/>
</dbReference>
<dbReference type="GO" id="GO:0032040">
    <property type="term" value="C:small-subunit processome"/>
    <property type="evidence" value="ECO:0000314"/>
    <property type="project" value="UniProtKB"/>
</dbReference>
<dbReference type="GO" id="GO:0034455">
    <property type="term" value="C:t-UTP complex"/>
    <property type="evidence" value="ECO:0000318"/>
    <property type="project" value="GO_Central"/>
</dbReference>
<dbReference type="GO" id="GO:0003723">
    <property type="term" value="F:RNA binding"/>
    <property type="evidence" value="ECO:0007005"/>
    <property type="project" value="UniProtKB"/>
</dbReference>
<dbReference type="GO" id="GO:0030515">
    <property type="term" value="F:snoRNA binding"/>
    <property type="evidence" value="ECO:0000318"/>
    <property type="project" value="GO_Central"/>
</dbReference>
<dbReference type="GO" id="GO:0000462">
    <property type="term" value="P:maturation of SSU-rRNA from tricistronic rRNA transcript (SSU-rRNA, 5.8S rRNA, LSU-rRNA)"/>
    <property type="evidence" value="ECO:0000318"/>
    <property type="project" value="GO_Central"/>
</dbReference>
<dbReference type="GO" id="GO:0061351">
    <property type="term" value="P:neural precursor cell proliferation"/>
    <property type="evidence" value="ECO:0000315"/>
    <property type="project" value="UniProtKB"/>
</dbReference>
<dbReference type="GO" id="GO:2000234">
    <property type="term" value="P:positive regulation of rRNA processing"/>
    <property type="evidence" value="ECO:0000315"/>
    <property type="project" value="UniProtKB"/>
</dbReference>
<dbReference type="GO" id="GO:0045943">
    <property type="term" value="P:positive regulation of transcription by RNA polymerase I"/>
    <property type="evidence" value="ECO:0000315"/>
    <property type="project" value="UniProtKB"/>
</dbReference>
<dbReference type="GO" id="GO:1902570">
    <property type="term" value="P:protein localization to nucleolus"/>
    <property type="evidence" value="ECO:0000314"/>
    <property type="project" value="UniProtKB"/>
</dbReference>
<dbReference type="GO" id="GO:0042274">
    <property type="term" value="P:ribosomal small subunit biogenesis"/>
    <property type="evidence" value="ECO:0000314"/>
    <property type="project" value="UniProtKB"/>
</dbReference>
<dbReference type="GO" id="GO:0016072">
    <property type="term" value="P:rRNA metabolic process"/>
    <property type="evidence" value="ECO:0000315"/>
    <property type="project" value="UniProtKB"/>
</dbReference>
<dbReference type="FunFam" id="1.25.10.10:FF:000534">
    <property type="entry name" value="HEAT repeat containing 1"/>
    <property type="match status" value="1"/>
</dbReference>
<dbReference type="Gene3D" id="1.25.10.10">
    <property type="entry name" value="Leucine-rich Repeat Variant"/>
    <property type="match status" value="3"/>
</dbReference>
<dbReference type="InterPro" id="IPR011989">
    <property type="entry name" value="ARM-like"/>
</dbReference>
<dbReference type="InterPro" id="IPR016024">
    <property type="entry name" value="ARM-type_fold"/>
</dbReference>
<dbReference type="InterPro" id="IPR012954">
    <property type="entry name" value="BP28_C_dom"/>
</dbReference>
<dbReference type="InterPro" id="IPR056473">
    <property type="entry name" value="HEAT_Utp10/HEAT1"/>
</dbReference>
<dbReference type="InterPro" id="IPR022125">
    <property type="entry name" value="U3snoRNP10_N"/>
</dbReference>
<dbReference type="InterPro" id="IPR040191">
    <property type="entry name" value="UTP10"/>
</dbReference>
<dbReference type="PANTHER" id="PTHR13457">
    <property type="entry name" value="BAP28"/>
    <property type="match status" value="1"/>
</dbReference>
<dbReference type="PANTHER" id="PTHR13457:SF1">
    <property type="entry name" value="HEAT REPEAT-CONTAINING PROTEIN 1"/>
    <property type="match status" value="1"/>
</dbReference>
<dbReference type="Pfam" id="PF08146">
    <property type="entry name" value="BP28CT"/>
    <property type="match status" value="1"/>
</dbReference>
<dbReference type="Pfam" id="PF23243">
    <property type="entry name" value="HEAT_HEATR1"/>
    <property type="match status" value="1"/>
</dbReference>
<dbReference type="Pfam" id="PF12397">
    <property type="entry name" value="U3snoRNP10"/>
    <property type="match status" value="1"/>
</dbReference>
<dbReference type="SMART" id="SM01036">
    <property type="entry name" value="BP28CT"/>
    <property type="match status" value="1"/>
</dbReference>
<dbReference type="SUPFAM" id="SSF48371">
    <property type="entry name" value="ARM repeat"/>
    <property type="match status" value="3"/>
</dbReference>
<evidence type="ECO:0000255" key="1"/>
<evidence type="ECO:0000256" key="2">
    <source>
        <dbReference type="SAM" id="MobiDB-lite"/>
    </source>
</evidence>
<evidence type="ECO:0000269" key="3">
    <source>
    </source>
</evidence>
<evidence type="ECO:0000269" key="4">
    <source>
    </source>
</evidence>
<evidence type="ECO:0000269" key="5">
    <source>
    </source>
</evidence>
<evidence type="ECO:0000269" key="6">
    <source>
    </source>
</evidence>
<evidence type="ECO:0000269" key="7">
    <source>
    </source>
</evidence>
<evidence type="ECO:0000269" key="8">
    <source>
    </source>
</evidence>
<evidence type="ECO:0000269" key="9">
    <source ref="1"/>
</evidence>
<evidence type="ECO:0000305" key="10"/>
<evidence type="ECO:0000312" key="11">
    <source>
        <dbReference type="HGNC" id="HGNC:25517"/>
    </source>
</evidence>
<evidence type="ECO:0000312" key="12">
    <source>
        <dbReference type="Proteomes" id="UP000005640"/>
    </source>
</evidence>
<evidence type="ECO:0007744" key="13">
    <source>
        <dbReference type="PDB" id="7MQ8"/>
    </source>
</evidence>
<evidence type="ECO:0007744" key="14">
    <source>
        <dbReference type="PDB" id="7MQ9"/>
    </source>
</evidence>
<evidence type="ECO:0007744" key="15">
    <source>
        <dbReference type="PDB" id="7MQA"/>
    </source>
</evidence>
<evidence type="ECO:0007744" key="16">
    <source>
    </source>
</evidence>
<evidence type="ECO:0007744" key="17">
    <source>
    </source>
</evidence>
<evidence type="ECO:0007744" key="18">
    <source>
    </source>
</evidence>
<evidence type="ECO:0007744" key="19">
    <source>
    </source>
</evidence>
<evidence type="ECO:0007744" key="20">
    <source>
    </source>
</evidence>
<reference key="1">
    <citation type="patent" date="2001-01-04" number="WO0100669">
        <title>A novel BAP28 gene and protein.</title>
        <authorList>
            <person name="Bougueleret L."/>
            <person name="Chumakov I."/>
            <person name="Barry C."/>
            <person name="Cohen-Akenine A."/>
        </authorList>
    </citation>
    <scope>NUCLEOTIDE SEQUENCE [MRNA]</scope>
    <scope>VARIANTS ARG-348; VAL-607; SER-1694; ALA-1854; ASP-1967 AND GLY-2017</scope>
</reference>
<reference key="2">
    <citation type="journal article" date="2006" name="Nature">
        <title>The DNA sequence and biological annotation of human chromosome 1.</title>
        <authorList>
            <person name="Gregory S.G."/>
            <person name="Barlow K.F."/>
            <person name="McLay K.E."/>
            <person name="Kaul R."/>
            <person name="Swarbreck D."/>
            <person name="Dunham A."/>
            <person name="Scott C.E."/>
            <person name="Howe K.L."/>
            <person name="Woodfine K."/>
            <person name="Spencer C.C.A."/>
            <person name="Jones M.C."/>
            <person name="Gillson C."/>
            <person name="Searle S."/>
            <person name="Zhou Y."/>
            <person name="Kokocinski F."/>
            <person name="McDonald L."/>
            <person name="Evans R."/>
            <person name="Phillips K."/>
            <person name="Atkinson A."/>
            <person name="Cooper R."/>
            <person name="Jones C."/>
            <person name="Hall R.E."/>
            <person name="Andrews T.D."/>
            <person name="Lloyd C."/>
            <person name="Ainscough R."/>
            <person name="Almeida J.P."/>
            <person name="Ambrose K.D."/>
            <person name="Anderson F."/>
            <person name="Andrew R.W."/>
            <person name="Ashwell R.I.S."/>
            <person name="Aubin K."/>
            <person name="Babbage A.K."/>
            <person name="Bagguley C.L."/>
            <person name="Bailey J."/>
            <person name="Beasley H."/>
            <person name="Bethel G."/>
            <person name="Bird C.P."/>
            <person name="Bray-Allen S."/>
            <person name="Brown J.Y."/>
            <person name="Brown A.J."/>
            <person name="Buckley D."/>
            <person name="Burton J."/>
            <person name="Bye J."/>
            <person name="Carder C."/>
            <person name="Chapman J.C."/>
            <person name="Clark S.Y."/>
            <person name="Clarke G."/>
            <person name="Clee C."/>
            <person name="Cobley V."/>
            <person name="Collier R.E."/>
            <person name="Corby N."/>
            <person name="Coville G.J."/>
            <person name="Davies J."/>
            <person name="Deadman R."/>
            <person name="Dunn M."/>
            <person name="Earthrowl M."/>
            <person name="Ellington A.G."/>
            <person name="Errington H."/>
            <person name="Frankish A."/>
            <person name="Frankland J."/>
            <person name="French L."/>
            <person name="Garner P."/>
            <person name="Garnett J."/>
            <person name="Gay L."/>
            <person name="Ghori M.R.J."/>
            <person name="Gibson R."/>
            <person name="Gilby L.M."/>
            <person name="Gillett W."/>
            <person name="Glithero R.J."/>
            <person name="Grafham D.V."/>
            <person name="Griffiths C."/>
            <person name="Griffiths-Jones S."/>
            <person name="Grocock R."/>
            <person name="Hammond S."/>
            <person name="Harrison E.S.I."/>
            <person name="Hart E."/>
            <person name="Haugen E."/>
            <person name="Heath P.D."/>
            <person name="Holmes S."/>
            <person name="Holt K."/>
            <person name="Howden P.J."/>
            <person name="Hunt A.R."/>
            <person name="Hunt S.E."/>
            <person name="Hunter G."/>
            <person name="Isherwood J."/>
            <person name="James R."/>
            <person name="Johnson C."/>
            <person name="Johnson D."/>
            <person name="Joy A."/>
            <person name="Kay M."/>
            <person name="Kershaw J.K."/>
            <person name="Kibukawa M."/>
            <person name="Kimberley A.M."/>
            <person name="King A."/>
            <person name="Knights A.J."/>
            <person name="Lad H."/>
            <person name="Laird G."/>
            <person name="Lawlor S."/>
            <person name="Leongamornlert D.A."/>
            <person name="Lloyd D.M."/>
            <person name="Loveland J."/>
            <person name="Lovell J."/>
            <person name="Lush M.J."/>
            <person name="Lyne R."/>
            <person name="Martin S."/>
            <person name="Mashreghi-Mohammadi M."/>
            <person name="Matthews L."/>
            <person name="Matthews N.S.W."/>
            <person name="McLaren S."/>
            <person name="Milne S."/>
            <person name="Mistry S."/>
            <person name="Moore M.J.F."/>
            <person name="Nickerson T."/>
            <person name="O'Dell C.N."/>
            <person name="Oliver K."/>
            <person name="Palmeiri A."/>
            <person name="Palmer S.A."/>
            <person name="Parker A."/>
            <person name="Patel D."/>
            <person name="Pearce A.V."/>
            <person name="Peck A.I."/>
            <person name="Pelan S."/>
            <person name="Phelps K."/>
            <person name="Phillimore B.J."/>
            <person name="Plumb R."/>
            <person name="Rajan J."/>
            <person name="Raymond C."/>
            <person name="Rouse G."/>
            <person name="Saenphimmachak C."/>
            <person name="Sehra H.K."/>
            <person name="Sheridan E."/>
            <person name="Shownkeen R."/>
            <person name="Sims S."/>
            <person name="Skuce C.D."/>
            <person name="Smith M."/>
            <person name="Steward C."/>
            <person name="Subramanian S."/>
            <person name="Sycamore N."/>
            <person name="Tracey A."/>
            <person name="Tromans A."/>
            <person name="Van Helmond Z."/>
            <person name="Wall M."/>
            <person name="Wallis J.M."/>
            <person name="White S."/>
            <person name="Whitehead S.L."/>
            <person name="Wilkinson J.E."/>
            <person name="Willey D.L."/>
            <person name="Williams H."/>
            <person name="Wilming L."/>
            <person name="Wray P.W."/>
            <person name="Wu Z."/>
            <person name="Coulson A."/>
            <person name="Vaudin M."/>
            <person name="Sulston J.E."/>
            <person name="Durbin R.M."/>
            <person name="Hubbard T."/>
            <person name="Wooster R."/>
            <person name="Dunham I."/>
            <person name="Carter N.P."/>
            <person name="McVean G."/>
            <person name="Ross M.T."/>
            <person name="Harrow J."/>
            <person name="Olson M.V."/>
            <person name="Beck S."/>
            <person name="Rogers J."/>
            <person name="Bentley D.R."/>
        </authorList>
    </citation>
    <scope>NUCLEOTIDE SEQUENCE [LARGE SCALE GENOMIC DNA]</scope>
</reference>
<reference key="3">
    <citation type="journal article" date="2004" name="Genome Res.">
        <title>The status, quality, and expansion of the NIH full-length cDNA project: the Mammalian Gene Collection (MGC).</title>
        <authorList>
            <consortium name="The MGC Project Team"/>
        </authorList>
    </citation>
    <scope>NUCLEOTIDE SEQUENCE [LARGE SCALE MRNA] OF 1039-2144</scope>
    <scope>VARIANTS SER-1694; ALA-1854; ASP-1967 AND GLY-2017</scope>
    <source>
        <tissue>Lymph</tissue>
    </source>
</reference>
<reference key="4">
    <citation type="journal article" date="2004" name="Nat. Genet.">
        <title>Complete sequencing and characterization of 21,243 full-length human cDNAs.</title>
        <authorList>
            <person name="Ota T."/>
            <person name="Suzuki Y."/>
            <person name="Nishikawa T."/>
            <person name="Otsuki T."/>
            <person name="Sugiyama T."/>
            <person name="Irie R."/>
            <person name="Wakamatsu A."/>
            <person name="Hayashi K."/>
            <person name="Sato H."/>
            <person name="Nagai K."/>
            <person name="Kimura K."/>
            <person name="Makita H."/>
            <person name="Sekine M."/>
            <person name="Obayashi M."/>
            <person name="Nishi T."/>
            <person name="Shibahara T."/>
            <person name="Tanaka T."/>
            <person name="Ishii S."/>
            <person name="Yamamoto J."/>
            <person name="Saito K."/>
            <person name="Kawai Y."/>
            <person name="Isono Y."/>
            <person name="Nakamura Y."/>
            <person name="Nagahari K."/>
            <person name="Murakami K."/>
            <person name="Yasuda T."/>
            <person name="Iwayanagi T."/>
            <person name="Wagatsuma M."/>
            <person name="Shiratori A."/>
            <person name="Sudo H."/>
            <person name="Hosoiri T."/>
            <person name="Kaku Y."/>
            <person name="Kodaira H."/>
            <person name="Kondo H."/>
            <person name="Sugawara M."/>
            <person name="Takahashi M."/>
            <person name="Kanda K."/>
            <person name="Yokoi T."/>
            <person name="Furuya T."/>
            <person name="Kikkawa E."/>
            <person name="Omura Y."/>
            <person name="Abe K."/>
            <person name="Kamihara K."/>
            <person name="Katsuta N."/>
            <person name="Sato K."/>
            <person name="Tanikawa M."/>
            <person name="Yamazaki M."/>
            <person name="Ninomiya K."/>
            <person name="Ishibashi T."/>
            <person name="Yamashita H."/>
            <person name="Murakawa K."/>
            <person name="Fujimori K."/>
            <person name="Tanai H."/>
            <person name="Kimata M."/>
            <person name="Watanabe M."/>
            <person name="Hiraoka S."/>
            <person name="Chiba Y."/>
            <person name="Ishida S."/>
            <person name="Ono Y."/>
            <person name="Takiguchi S."/>
            <person name="Watanabe S."/>
            <person name="Yosida M."/>
            <person name="Hotuta T."/>
            <person name="Kusano J."/>
            <person name="Kanehori K."/>
            <person name="Takahashi-Fujii A."/>
            <person name="Hara H."/>
            <person name="Tanase T.-O."/>
            <person name="Nomura Y."/>
            <person name="Togiya S."/>
            <person name="Komai F."/>
            <person name="Hara R."/>
            <person name="Takeuchi K."/>
            <person name="Arita M."/>
            <person name="Imose N."/>
            <person name="Musashino K."/>
            <person name="Yuuki H."/>
            <person name="Oshima A."/>
            <person name="Sasaki N."/>
            <person name="Aotsuka S."/>
            <person name="Yoshikawa Y."/>
            <person name="Matsunawa H."/>
            <person name="Ichihara T."/>
            <person name="Shiohata N."/>
            <person name="Sano S."/>
            <person name="Moriya S."/>
            <person name="Momiyama H."/>
            <person name="Satoh N."/>
            <person name="Takami S."/>
            <person name="Terashima Y."/>
            <person name="Suzuki O."/>
            <person name="Nakagawa S."/>
            <person name="Senoh A."/>
            <person name="Mizoguchi H."/>
            <person name="Goto Y."/>
            <person name="Shimizu F."/>
            <person name="Wakebe H."/>
            <person name="Hishigaki H."/>
            <person name="Watanabe T."/>
            <person name="Sugiyama A."/>
            <person name="Takemoto M."/>
            <person name="Kawakami B."/>
            <person name="Yamazaki M."/>
            <person name="Watanabe K."/>
            <person name="Kumagai A."/>
            <person name="Itakura S."/>
            <person name="Fukuzumi Y."/>
            <person name="Fujimori Y."/>
            <person name="Komiyama M."/>
            <person name="Tashiro H."/>
            <person name="Tanigami A."/>
            <person name="Fujiwara T."/>
            <person name="Ono T."/>
            <person name="Yamada K."/>
            <person name="Fujii Y."/>
            <person name="Ozaki K."/>
            <person name="Hirao M."/>
            <person name="Ohmori Y."/>
            <person name="Kawabata A."/>
            <person name="Hikiji T."/>
            <person name="Kobatake N."/>
            <person name="Inagaki H."/>
            <person name="Ikema Y."/>
            <person name="Okamoto S."/>
            <person name="Okitani R."/>
            <person name="Kawakami T."/>
            <person name="Noguchi S."/>
            <person name="Itoh T."/>
            <person name="Shigeta K."/>
            <person name="Senba T."/>
            <person name="Matsumura K."/>
            <person name="Nakajima Y."/>
            <person name="Mizuno T."/>
            <person name="Morinaga M."/>
            <person name="Sasaki M."/>
            <person name="Togashi T."/>
            <person name="Oyama M."/>
            <person name="Hata H."/>
            <person name="Watanabe M."/>
            <person name="Komatsu T."/>
            <person name="Mizushima-Sugano J."/>
            <person name="Satoh T."/>
            <person name="Shirai Y."/>
            <person name="Takahashi Y."/>
            <person name="Nakagawa K."/>
            <person name="Okumura K."/>
            <person name="Nagase T."/>
            <person name="Nomura N."/>
            <person name="Kikuchi H."/>
            <person name="Masuho Y."/>
            <person name="Yamashita R."/>
            <person name="Nakai K."/>
            <person name="Yada T."/>
            <person name="Nakamura Y."/>
            <person name="Ohara O."/>
            <person name="Isogai T."/>
            <person name="Sugano S."/>
        </authorList>
    </citation>
    <scope>NUCLEOTIDE SEQUENCE [LARGE SCALE MRNA] OF 1777-2144</scope>
</reference>
<reference key="5">
    <citation type="journal article" date="2002" name="Mol. Biol. Cell">
        <title>Functional proteomic analysis of human nucleolus.</title>
        <authorList>
            <person name="Scherl A."/>
            <person name="Coute Y."/>
            <person name="Deon C."/>
            <person name="Calle A."/>
            <person name="Kindbeiter K."/>
            <person name="Sanchez J.-C."/>
            <person name="Greco A."/>
            <person name="Hochstrasser D.F."/>
            <person name="Diaz J.-J."/>
        </authorList>
    </citation>
    <scope>SUBCELLULAR LOCATION [LARGE SCALE ANALYSIS]</scope>
    <source>
        <tissue>Cervix carcinoma</tissue>
    </source>
</reference>
<reference key="6">
    <citation type="journal article" date="2007" name="Genes Dev.">
        <title>Recruitment of factors linking transcription and processing of pre-rRNA to NOR chromatin is UBF-dependent and occurs independent of transcription in human cells.</title>
        <authorList>
            <person name="Prieto J.L."/>
            <person name="McStay B."/>
        </authorList>
    </citation>
    <scope>FUNCTION</scope>
    <scope>SUBCELLULAR LOCATION</scope>
    <scope>SUBUNIT</scope>
</reference>
<reference key="7">
    <citation type="journal article" date="2007" name="Science">
        <title>ATM and ATR substrate analysis reveals extensive protein networks responsive to DNA damage.</title>
        <authorList>
            <person name="Matsuoka S."/>
            <person name="Ballif B.A."/>
            <person name="Smogorzewska A."/>
            <person name="McDonald E.R. III"/>
            <person name="Hurov K.E."/>
            <person name="Luo J."/>
            <person name="Bakalarski C.E."/>
            <person name="Zhao Z."/>
            <person name="Solimini N."/>
            <person name="Lerenthal Y."/>
            <person name="Shiloh Y."/>
            <person name="Gygi S.P."/>
            <person name="Elledge S.J."/>
        </authorList>
    </citation>
    <scope>IDENTIFICATION BY MASS SPECTROMETRY [LARGE SCALE ANALYSIS]</scope>
    <source>
        <tissue>Embryonic kidney</tissue>
    </source>
</reference>
<reference key="8">
    <citation type="journal article" date="2008" name="Mol. Cell">
        <title>Kinase-selective enrichment enables quantitative phosphoproteomics of the kinome across the cell cycle.</title>
        <authorList>
            <person name="Daub H."/>
            <person name="Olsen J.V."/>
            <person name="Bairlein M."/>
            <person name="Gnad F."/>
            <person name="Oppermann F.S."/>
            <person name="Korner R."/>
            <person name="Greff Z."/>
            <person name="Keri G."/>
            <person name="Stemmann O."/>
            <person name="Mann M."/>
        </authorList>
    </citation>
    <scope>PHOSPHORYLATION [LARGE SCALE ANALYSIS] AT SER-1190</scope>
    <scope>IDENTIFICATION BY MASS SPECTROMETRY [LARGE SCALE ANALYSIS]</scope>
    <source>
        <tissue>Cervix carcinoma</tissue>
    </source>
</reference>
<reference key="9">
    <citation type="journal article" date="2010" name="Sci. Signal.">
        <title>Quantitative phosphoproteomics reveals widespread full phosphorylation site occupancy during mitosis.</title>
        <authorList>
            <person name="Olsen J.V."/>
            <person name="Vermeulen M."/>
            <person name="Santamaria A."/>
            <person name="Kumar C."/>
            <person name="Miller M.L."/>
            <person name="Jensen L.J."/>
            <person name="Gnad F."/>
            <person name="Cox J."/>
            <person name="Jensen T.S."/>
            <person name="Nigg E.A."/>
            <person name="Brunak S."/>
            <person name="Mann M."/>
        </authorList>
    </citation>
    <scope>PHOSPHORYLATION [LARGE SCALE ANALYSIS] AT SER-1190</scope>
    <scope>IDENTIFICATION BY MASS SPECTROMETRY [LARGE SCALE ANALYSIS]</scope>
    <source>
        <tissue>Cervix carcinoma</tissue>
    </source>
</reference>
<reference key="10">
    <citation type="journal article" date="2011" name="BMC Syst. Biol.">
        <title>Initial characterization of the human central proteome.</title>
        <authorList>
            <person name="Burkard T.R."/>
            <person name="Planyavsky M."/>
            <person name="Kaupe I."/>
            <person name="Breitwieser F.P."/>
            <person name="Buerckstuemmer T."/>
            <person name="Bennett K.L."/>
            <person name="Superti-Furga G."/>
            <person name="Colinge J."/>
        </authorList>
    </citation>
    <scope>IDENTIFICATION BY MASS SPECTROMETRY [LARGE SCALE ANALYSIS]</scope>
</reference>
<reference key="11">
    <citation type="journal article" date="2012" name="Mol. Cell. Proteomics">
        <title>Comparative large-scale characterisation of plant vs. mammal proteins reveals similar and idiosyncratic N-alpha acetylation features.</title>
        <authorList>
            <person name="Bienvenut W.V."/>
            <person name="Sumpton D."/>
            <person name="Martinez A."/>
            <person name="Lilla S."/>
            <person name="Espagne C."/>
            <person name="Meinnel T."/>
            <person name="Giglione C."/>
        </authorList>
    </citation>
    <scope>ACETYLATION [LARGE SCALE ANALYSIS] AT THR-2</scope>
    <scope>CLEAVAGE OF INITIATOR METHIONINE [LARGE SCALE ANALYSIS]</scope>
    <scope>IDENTIFICATION BY MASS SPECTROMETRY [LARGE SCALE ANALYSIS]</scope>
</reference>
<reference key="12">
    <citation type="journal article" date="2012" name="Proc. Natl. Acad. Sci. U.S.A.">
        <title>N-terminal acetylome analyses and functional insights of the N-terminal acetyltransferase NatB.</title>
        <authorList>
            <person name="Van Damme P."/>
            <person name="Lasa M."/>
            <person name="Polevoda B."/>
            <person name="Gazquez C."/>
            <person name="Elosegui-Artola A."/>
            <person name="Kim D.S."/>
            <person name="De Juan-Pardo E."/>
            <person name="Demeyer K."/>
            <person name="Hole K."/>
            <person name="Larrea E."/>
            <person name="Timmerman E."/>
            <person name="Prieto J."/>
            <person name="Arnesen T."/>
            <person name="Sherman F."/>
            <person name="Gevaert K."/>
            <person name="Aldabe R."/>
        </authorList>
    </citation>
    <scope>ACETYLATION [LARGE SCALE ANALYSIS] AT MET-1 AND THR-2</scope>
    <scope>CLEAVAGE OF INITIATOR METHIONINE [LARGE SCALE ANALYSIS]</scope>
    <scope>IDENTIFICATION BY MASS SPECTROMETRY [LARGE SCALE ANALYSIS]</scope>
</reference>
<reference key="13">
    <citation type="journal article" date="2013" name="J. Proteome Res.">
        <title>Toward a comprehensive characterization of a human cancer cell phosphoproteome.</title>
        <authorList>
            <person name="Zhou H."/>
            <person name="Di Palma S."/>
            <person name="Preisinger C."/>
            <person name="Peng M."/>
            <person name="Polat A.N."/>
            <person name="Heck A.J."/>
            <person name="Mohammed S."/>
        </authorList>
    </citation>
    <scope>PHOSPHORYLATION [LARGE SCALE ANALYSIS] AT SER-516; SER-1190 AND SER-1492</scope>
    <scope>IDENTIFICATION BY MASS SPECTROMETRY [LARGE SCALE ANALYSIS]</scope>
    <source>
        <tissue>Cervix carcinoma</tissue>
        <tissue>Erythroleukemia</tissue>
    </source>
</reference>
<reference evidence="13 14 15" key="14">
    <citation type="journal article" date="2021" name="Science">
        <title>Nucleolar maturation of the human small subunit processome.</title>
        <authorList>
            <person name="Singh S."/>
            <person name="Vanden Broeck A."/>
            <person name="Miller L."/>
            <person name="Chaker-Margot M."/>
            <person name="Klinge S."/>
        </authorList>
    </citation>
    <scope>STRUCTURE BY ELECTRON MICROSCOPY (2.70 ANGSTROMS)</scope>
    <scope>FUNCTION</scope>
    <scope>SUBUNIT</scope>
    <scope>SUBCELLULAR LOCATION</scope>
</reference>
<reference key="15">
    <citation type="journal article" date="2024" name="EMBO Rep.">
        <title>Ribogenesis boosts controlled by HEATR1-MYC interplay promote transition into brain tumour growth.</title>
        <authorList>
            <person name="Diaz L.R."/>
            <person name="Gil-Ranedo J."/>
            <person name="Jaworek K.J."/>
            <person name="Nsek N."/>
            <person name="Marques J.P."/>
            <person name="Costa E."/>
            <person name="Hilton D.A."/>
            <person name="Bieluczyk H."/>
            <person name="Warrington O."/>
            <person name="Hanemann C.O."/>
            <person name="Futschik M.E."/>
            <person name="Bossing T."/>
            <person name="Barros C.S."/>
        </authorList>
    </citation>
    <scope>FUNCTION</scope>
    <scope>INTERACTION WITH MYC</scope>
    <scope>SUBCELLULAR LOCATION</scope>
</reference>
<reference key="16">
    <citation type="journal article" date="2007" name="J. Proteome Res.">
        <title>Detection and validation of non-synonymous coding SNPs from orthogonal analysis of shotgun proteomics data.</title>
        <authorList>
            <person name="Bunger M.K."/>
            <person name="Cargile B.J."/>
            <person name="Sevinsky J.R."/>
            <person name="Deyanova E."/>
            <person name="Yates N.A."/>
            <person name="Hendrickson R.C."/>
            <person name="Stephenson J.L. Jr."/>
        </authorList>
    </citation>
    <scope>VARIANT GLY-2017</scope>
    <scope>IDENTIFICATION BY MASS SPECTROMETRY</scope>
</reference>
<keyword id="KW-0002">3D-structure</keyword>
<keyword id="KW-0007">Acetylation</keyword>
<keyword id="KW-0539">Nucleus</keyword>
<keyword id="KW-0597">Phosphoprotein</keyword>
<keyword id="KW-1267">Proteomics identification</keyword>
<keyword id="KW-1185">Reference proteome</keyword>
<keyword id="KW-0677">Repeat</keyword>
<keyword id="KW-0687">Ribonucleoprotein</keyword>
<keyword id="KW-0690">Ribosome biogenesis</keyword>
<keyword id="KW-0698">rRNA processing</keyword>
<keyword id="KW-0804">Transcription</keyword>
<keyword id="KW-0805">Transcription regulation</keyword>
<gene>
    <name evidence="11" type="primary">HEATR1</name>
    <name type="synonym">BAP28</name>
    <name type="synonym">UTP10</name>
</gene>
<name>HEAT1_HUMAN</name>
<feature type="chain" id="PRO_0000424485" description="HEAT repeat-containing protein 1">
    <location>
        <begin position="1"/>
        <end position="2144"/>
    </location>
</feature>
<feature type="initiator methionine" description="Removed; alternate" evidence="18 19">
    <location>
        <position position="1"/>
    </location>
</feature>
<feature type="chain" id="PRO_0000186201" description="HEAT repeat-containing protein 1, N-terminally processed">
    <location>
        <begin position="2"/>
        <end position="2144"/>
    </location>
</feature>
<feature type="repeat" description="HEAT 1" evidence="1">
    <location>
        <begin position="913"/>
        <end position="951"/>
    </location>
</feature>
<feature type="repeat" description="HEAT 2" evidence="1">
    <location>
        <begin position="1347"/>
        <end position="1385"/>
    </location>
</feature>
<feature type="repeat" description="HEAT 3" evidence="1">
    <location>
        <begin position="1594"/>
        <end position="1632"/>
    </location>
</feature>
<feature type="repeat" description="HEAT 4" evidence="1">
    <location>
        <begin position="1730"/>
        <end position="1770"/>
    </location>
</feature>
<feature type="repeat" description="HEAT 5" evidence="1">
    <location>
        <begin position="2100"/>
        <end position="2138"/>
    </location>
</feature>
<feature type="region of interest" description="Disordered" evidence="2">
    <location>
        <begin position="1170"/>
        <end position="1191"/>
    </location>
</feature>
<feature type="modified residue" description="N-acetylmethionine" evidence="19">
    <location>
        <position position="1"/>
    </location>
</feature>
<feature type="modified residue" description="N-acetylthreonine; in HEAT repeat-containing protein 1, N-terminally processed" evidence="18 19">
    <location>
        <position position="2"/>
    </location>
</feature>
<feature type="modified residue" description="Phosphoserine" evidence="20">
    <location>
        <position position="516"/>
    </location>
</feature>
<feature type="modified residue" description="Phosphoserine" evidence="16 17 20">
    <location>
        <position position="1190"/>
    </location>
</feature>
<feature type="modified residue" description="Phosphoserine" evidence="20">
    <location>
        <position position="1492"/>
    </location>
</feature>
<feature type="sequence variant" id="VAR_049329" description="In dbSNP:rs2794751." evidence="9">
    <original>H</original>
    <variation>R</variation>
    <location>
        <position position="348"/>
    </location>
</feature>
<feature type="sequence variant" id="VAR_049330" description="In dbSNP:rs2794763." evidence="9">
    <original>M</original>
    <variation>V</variation>
    <location>
        <position position="607"/>
    </location>
</feature>
<feature type="sequence variant" id="VAR_049331" description="In dbSNP:rs16833953.">
    <original>D</original>
    <variation>G</variation>
    <location>
        <position position="957"/>
    </location>
</feature>
<feature type="sequence variant" id="VAR_049332" description="In dbSNP:rs653737.">
    <original>Y</original>
    <variation>C</variation>
    <location>
        <position position="1433"/>
    </location>
</feature>
<feature type="sequence variant" id="VAR_049333" description="In dbSNP:rs6661946.">
    <original>S</original>
    <variation>N</variation>
    <location>
        <position position="1559"/>
    </location>
</feature>
<feature type="sequence variant" id="VAR_049334" description="In dbSNP:rs16833884.">
    <original>R</original>
    <variation>H</variation>
    <location>
        <position position="1654"/>
    </location>
</feature>
<feature type="sequence variant" id="VAR_010939" description="In dbSNP:rs2275689." evidence="4 9">
    <original>N</original>
    <variation>S</variation>
    <location>
        <position position="1694"/>
    </location>
</feature>
<feature type="sequence variant" id="VAR_010940" description="In dbSNP:rs1885533." evidence="4 9">
    <original>V</original>
    <variation>A</variation>
    <location>
        <position position="1854"/>
    </location>
</feature>
<feature type="sequence variant" id="VAR_010941" description="In dbSNP:rs1126627." evidence="4 9">
    <original>N</original>
    <variation>D</variation>
    <location>
        <position position="1967"/>
    </location>
</feature>
<feature type="sequence variant" id="VAR_010942" description="Confirmed at protein level; dbSNP:rs2275687." evidence="4 5 9">
    <original>E</original>
    <variation>G</variation>
    <location>
        <position position="2017"/>
    </location>
</feature>
<feature type="sequence variant" id="VAR_049335" description="In dbSNP:rs6664730.">
    <original>S</original>
    <variation>L</variation>
    <location>
        <position position="2077"/>
    </location>
</feature>
<comment type="function">
    <text evidence="6 7 8">Ribosome biogenesis factor; required for recruitment of Myc to nucleoli (PubMed:38225354). Involved in nucleolar processing of pre-18S ribosomal RNA. Required for optimal pre-ribosomal RNA transcription by RNA polymerase I (PubMed:17699751). Part of the small subunit (SSU) processome, first precursor of the small eukaryotic ribosomal subunit. During the assembly of the SSU processome in the nucleolus, many ribosome biogenesis factors, an RNA chaperone and ribosomal proteins associate with the nascent pre-rRNA and work in concert to generate RNA folding, modifications, rearrangements and cleavage as well as targeted degradation of pre-ribosomal RNA by the RNA exosome (PubMed:34516797). Involved in neuronal-lineage cell proliferation (PubMed:38225354).</text>
</comment>
<comment type="subunit">
    <text evidence="6 7 8">Part of the small subunit (SSU) processome, composed of more than 70 proteins and the RNA chaperone small nucleolar RNA (snoRNA) U3 (PubMed:17699751, PubMed:34516797). Interacts with MYC; the interaction is required for localization of MYC to the nucleolus (PubMed:38225354).</text>
</comment>
<comment type="interaction">
    <interactant intactId="EBI-1048716">
        <id>Q9H583</id>
    </interactant>
    <interactant intactId="EBI-6248077">
        <id>Q76353</id>
    </interactant>
    <organismsDiffer>true</organismsDiffer>
    <experiments>3</experiments>
</comment>
<comment type="subcellular location">
    <subcellularLocation>
        <location evidence="3 6 7 8">Nucleus</location>
        <location evidence="3 6 7 8">Nucleolus</location>
    </subcellularLocation>
</comment>
<comment type="miscellaneous">
    <text evidence="8">The protein described in this entry is essential for the tumorigenic capacity of precancerous glioblastoma stem cells and their proliferation during tumorigenesis (PubMed:38225354). The protein is overexpressed in patient derived glioblastoma tissue compared to control brains (PubMed:38225354). Overexpression is more pronounced in high grade glioblastomas compared to low grade samples, and expression levels inversely correlate with patient survivability (PubMed:38225354).</text>
</comment>
<comment type="similarity">
    <text evidence="10">Belongs to the HEATR1/UTP10 family.</text>
</comment>
<comment type="sequence caution" evidence="10">
    <conflict type="erroneous initiation">
        <sequence resource="EMBL-CDS" id="BAA91564"/>
    </conflict>
</comment>
<sequence length="2144" mass="242370">MTSLAQQLQRLALPQSDASLLSRDEVASLLFDPKEAATIDRDTAFAIGCTGLEELLGIDPSFEQFEAPLFSQLAKTLERSVQTKAVNKQLDENISLFLIHLSPYFLLKPAQKCLEWLIHRFHIHLYNQDSLIACVLPYHETRIFVRVIQLLKINNSKHRWFWLLPVKQSGVPLAKGTLITHCYKDLGFMDFICSLVTKSVKVFAEYPGSSAQLRVLLAFYASTIVSALVAAEDVSDNIIAKLFPYIQKGLKSSLPDYRAATYMIICQISVKVTMENTFVNSLASQIIKTLTKIPSLIKDGLSCLIVLLQRQKPESLGKKPFPHLCNVPDLITILHGISETYDVSPLLHYMLPHLVVSIIHHVTGEETEGMDGQIYKRHLEAILTKISLKNNLDHLLASLLFEEYISYSSQEEMDSNKVSLLNEQFLPLIRLLESKYPRTLDVVLEEHLKEIADLKKQELFHQFVSLSTSGGKYQFLADSDTSLMLSLNHPLAPVRILAMNHLKKIMKTSKEGVDESFIKEAVLARLGDDNIDVVLSAISAFEIFKEHFSSEVTISNLLNLFQRAELSKNGEWYEVLKIAADILIKEEILSENDQLSNQVVVCLLPFMVINNDDTESAEMKIAIYLSKSGICSLHPLLRGWEEALENVIKSTKPGKLIGVANQKMIELLADNINLGDPSSMLKMVEDLISVGEEESFNLKQKVTFHVILSVLVSCCSSLKETHFPFAIRVFSLLQKKIKKLESVITAVEIPSEWHIELMLDRGIPVELWAHYVEELNSTQRVAVEDSVFLVFSLKKFIYALKAPKSFPKGDIWWNPEQLKEDSRDYLHLLIGLFEMMLNGADAVHFRVLMKLFIKVHLEDVFQLFKFCSVLWTYGSSLSNPLNCSVKTVLQTQALYVGCAMLSSQKTQCKHQLASISSPVVTSLLINLGSPVKEVRRAAIQCLQALSGVASPFYLIIDHLISKAEEITSDAAYVIQDLATLFEELQREKKLKSHQKLSETLKNLLSCVYSCPSYIAKDLMKVLQGVNGEMVLSQLLPMAEQLLEKIQKEPTAVLKDEAMVLHLTLGKYNEFSVSLLNEDPKSLDIFIKAVHTTKELYAGMPTIQITALEKITKPFFAAISDEKVQQKLLRMLFDLLVNCKNSHCAQTVSSVFKGISVNAEQVRIELEPPDKAKPLGTVQQKRRQKMQQKKSQDLESVQEVGGSYWQRVTLILELLQHKKKLRSPQILVPTLFNLLSRCLEPLPQEQGNMEYTKQLILSCLLNICQKLSPDGGKIPKDILDEEKFNVELIVQCIRLSEMPQTHHHALLLLGTVAGIFPDKVLHNIMSIFTFMGANVMRLDDTYSFQVINKTVKMVIPALIQSDSGDSIEVSRNVEEIVVKIISVFVDALPHVPEHRRLPILVQLVDTLGAEKFLWILLILLFEQYVTKTVLAAAYGEKDAILEADTEFWFSVCCEFSVQHQIQSLMNILQYLLKLPEEKEETIPKAVSFNKSESQEEMLQVFNVETHTSKQLRHFKFLSVSFMSQLLSSNNFLKKVVESGGPEILKGLEERLLETVLGYISAVAQSMERNADKLTVKFWRALLSKAYDLLDKVNALLPTETFIPVIRGLVGNPLPSVRRKALDLLNNKLQQNISWKKTIVTRFLKLVPDLLAIVQRKKKEGEEEQAINRQTALYTLKLLCKNFGAENPDPFVPVLNTAVKLIAPERKEEKNVLGSALLCIAEVTSTLEALAIPQLPSLMPSLLTTMKNTSELVSSEVYLLSALAALQKVVETLPHFISPYLEGILSQVIHLEKITSEMGSASQANIRLTSLKKTLATTLAPRVLLPAIKKTYKQIEKNWKNHMGPFMSILQEHIGVMKKEELTSHQSQLTAFFLEALDFRAQHSENDLEEVGKTENCIIDCLVAMVVKLSEVTFRPLFFKLFDWAKTEDAPKDRLLTFYNLADCIAEKLKGLFTLFAGHLVKPFADTLNQVNISKTDEAFFDSENDPEKCCLLLQFILNCLYKIFLFDTQHFISKERAEALMMPLVDQLENRLGGEEKFQERVTKHLIPCIAQFSVAMADDSLWKPLNYQILLKTRDSSPKVRFAALITVLALAEKLKENYIVLLPESIPFLAELMEDECEEVEHQCQKTIQQLETVLGEPLQSYF</sequence>